<reference key="1">
    <citation type="journal article" date="1984" name="FEBS Lett.">
        <title>Amino acid sequence of a novel Kunitz-type chymotrypsin inhibitor from hemolymph of silkworm larvae, Bombyx mori.</title>
        <authorList>
            <person name="Sasaki T."/>
        </authorList>
    </citation>
    <scope>PROTEIN SEQUENCE</scope>
    <source>
        <tissue>Larval hemolymph</tissue>
    </source>
</reference>
<dbReference type="PIR" id="A25740">
    <property type="entry name" value="TIMTC3"/>
</dbReference>
<dbReference type="SMR" id="P07481"/>
<dbReference type="STRING" id="7091.P07481"/>
<dbReference type="MEROPS" id="I02.018"/>
<dbReference type="InParanoid" id="P07481"/>
<dbReference type="Proteomes" id="UP000005204">
    <property type="component" value="Unassembled WGS sequence"/>
</dbReference>
<dbReference type="GO" id="GO:0005615">
    <property type="term" value="C:extracellular space"/>
    <property type="evidence" value="ECO:0007669"/>
    <property type="project" value="TreeGrafter"/>
</dbReference>
<dbReference type="GO" id="GO:0004867">
    <property type="term" value="F:serine-type endopeptidase inhibitor activity"/>
    <property type="evidence" value="ECO:0007669"/>
    <property type="project" value="UniProtKB-KW"/>
</dbReference>
<dbReference type="CDD" id="cd22634">
    <property type="entry name" value="Kunitz_SCI-I-like"/>
    <property type="match status" value="1"/>
</dbReference>
<dbReference type="FunFam" id="4.10.410.10:FF:000020">
    <property type="entry name" value="Collagen, type VI, alpha 3"/>
    <property type="match status" value="1"/>
</dbReference>
<dbReference type="Gene3D" id="4.10.410.10">
    <property type="entry name" value="Pancreatic trypsin inhibitor Kunitz domain"/>
    <property type="match status" value="1"/>
</dbReference>
<dbReference type="InterPro" id="IPR002223">
    <property type="entry name" value="Kunitz_BPTI"/>
</dbReference>
<dbReference type="InterPro" id="IPR036880">
    <property type="entry name" value="Kunitz_BPTI_sf"/>
</dbReference>
<dbReference type="InterPro" id="IPR020901">
    <property type="entry name" value="Prtase_inh_Kunz-CS"/>
</dbReference>
<dbReference type="InterPro" id="IPR050098">
    <property type="entry name" value="TFPI/VKTCI-like"/>
</dbReference>
<dbReference type="PANTHER" id="PTHR10083:SF374">
    <property type="entry name" value="BPTI_KUNITZ INHIBITOR DOMAIN-CONTAINING PROTEIN"/>
    <property type="match status" value="1"/>
</dbReference>
<dbReference type="PANTHER" id="PTHR10083">
    <property type="entry name" value="KUNITZ-TYPE PROTEASE INHIBITOR-RELATED"/>
    <property type="match status" value="1"/>
</dbReference>
<dbReference type="Pfam" id="PF00014">
    <property type="entry name" value="Kunitz_BPTI"/>
    <property type="match status" value="1"/>
</dbReference>
<dbReference type="PRINTS" id="PR00759">
    <property type="entry name" value="BASICPTASE"/>
</dbReference>
<dbReference type="SMART" id="SM00131">
    <property type="entry name" value="KU"/>
    <property type="match status" value="1"/>
</dbReference>
<dbReference type="SUPFAM" id="SSF57362">
    <property type="entry name" value="BPTI-like"/>
    <property type="match status" value="1"/>
</dbReference>
<dbReference type="PROSITE" id="PS00280">
    <property type="entry name" value="BPTI_KUNITZ_1"/>
    <property type="match status" value="1"/>
</dbReference>
<dbReference type="PROSITE" id="PS50279">
    <property type="entry name" value="BPTI_KUNITZ_2"/>
    <property type="match status" value="1"/>
</dbReference>
<accession>P07481</accession>
<organism>
    <name type="scientific">Bombyx mori</name>
    <name type="common">Silk moth</name>
    <dbReference type="NCBI Taxonomy" id="7091"/>
    <lineage>
        <taxon>Eukaryota</taxon>
        <taxon>Metazoa</taxon>
        <taxon>Ecdysozoa</taxon>
        <taxon>Arthropoda</taxon>
        <taxon>Hexapoda</taxon>
        <taxon>Insecta</taxon>
        <taxon>Pterygota</taxon>
        <taxon>Neoptera</taxon>
        <taxon>Endopterygota</taxon>
        <taxon>Lepidoptera</taxon>
        <taxon>Glossata</taxon>
        <taxon>Ditrysia</taxon>
        <taxon>Bombycoidea</taxon>
        <taxon>Bombycidae</taxon>
        <taxon>Bombycinae</taxon>
        <taxon>Bombyx</taxon>
    </lineage>
</organism>
<protein>
    <recommendedName>
        <fullName>Chymotrypsin inhibitor SCI-III</fullName>
    </recommendedName>
</protein>
<proteinExistence type="evidence at protein level"/>
<comment type="function">
    <text>Inhibits chymotrypsin and thus avoids the accidental chymotrypsin-mediated activation of prophenoloxidase. This enzyme is required by the insect immune system to produce melanin which is used to engulf foreign objects.</text>
</comment>
<sequence>DEPTTDLPICEQAFGDAGLCFGYMKLYSYNQETKNCEEFIYGGCQGNDNRFSTLAECEQKCIN</sequence>
<evidence type="ECO:0000250" key="1"/>
<evidence type="ECO:0000255" key="2">
    <source>
        <dbReference type="PROSITE-ProRule" id="PRU00031"/>
    </source>
</evidence>
<keyword id="KW-0903">Direct protein sequencing</keyword>
<keyword id="KW-1015">Disulfide bond</keyword>
<keyword id="KW-0646">Protease inhibitor</keyword>
<keyword id="KW-1185">Reference proteome</keyword>
<keyword id="KW-0722">Serine protease inhibitor</keyword>
<feature type="chain" id="PRO_0000155423" description="Chymotrypsin inhibitor SCI-III">
    <location>
        <begin position="1"/>
        <end position="63"/>
    </location>
</feature>
<feature type="domain" description="BPTI/Kunitz inhibitor" evidence="2">
    <location>
        <begin position="10"/>
        <end position="61"/>
    </location>
</feature>
<feature type="site" description="Reactive bond" evidence="1">
    <location>
        <begin position="21"/>
        <end position="22"/>
    </location>
</feature>
<feature type="disulfide bond" evidence="2">
    <location>
        <begin position="10"/>
        <end position="61"/>
    </location>
</feature>
<feature type="disulfide bond" evidence="2">
    <location>
        <begin position="20"/>
        <end position="44"/>
    </location>
</feature>
<feature type="disulfide bond" evidence="2">
    <location>
        <begin position="36"/>
        <end position="57"/>
    </location>
</feature>
<name>ISC3_BOMMO</name>